<dbReference type="EMBL" id="CP000316">
    <property type="protein sequence ID" value="ABE44346.1"/>
    <property type="molecule type" value="Genomic_DNA"/>
</dbReference>
<dbReference type="RefSeq" id="WP_011483344.1">
    <property type="nucleotide sequence ID" value="NC_007948.1"/>
</dbReference>
<dbReference type="SMR" id="Q12AU6"/>
<dbReference type="STRING" id="296591.Bpro_2427"/>
<dbReference type="KEGG" id="pol:Bpro_2427"/>
<dbReference type="eggNOG" id="COG0858">
    <property type="taxonomic scope" value="Bacteria"/>
</dbReference>
<dbReference type="HOGENOM" id="CLU_089475_5_1_4"/>
<dbReference type="OrthoDB" id="307788at2"/>
<dbReference type="Proteomes" id="UP000001983">
    <property type="component" value="Chromosome"/>
</dbReference>
<dbReference type="GO" id="GO:0005829">
    <property type="term" value="C:cytosol"/>
    <property type="evidence" value="ECO:0007669"/>
    <property type="project" value="TreeGrafter"/>
</dbReference>
<dbReference type="GO" id="GO:0043024">
    <property type="term" value="F:ribosomal small subunit binding"/>
    <property type="evidence" value="ECO:0007669"/>
    <property type="project" value="TreeGrafter"/>
</dbReference>
<dbReference type="GO" id="GO:0030490">
    <property type="term" value="P:maturation of SSU-rRNA"/>
    <property type="evidence" value="ECO:0007669"/>
    <property type="project" value="UniProtKB-UniRule"/>
</dbReference>
<dbReference type="Gene3D" id="3.30.300.20">
    <property type="match status" value="1"/>
</dbReference>
<dbReference type="HAMAP" id="MF_00003">
    <property type="entry name" value="RbfA"/>
    <property type="match status" value="1"/>
</dbReference>
<dbReference type="InterPro" id="IPR015946">
    <property type="entry name" value="KH_dom-like_a/b"/>
</dbReference>
<dbReference type="InterPro" id="IPR000238">
    <property type="entry name" value="RbfA"/>
</dbReference>
<dbReference type="InterPro" id="IPR023799">
    <property type="entry name" value="RbfA_dom_sf"/>
</dbReference>
<dbReference type="NCBIfam" id="TIGR00082">
    <property type="entry name" value="rbfA"/>
    <property type="match status" value="1"/>
</dbReference>
<dbReference type="PANTHER" id="PTHR33515">
    <property type="entry name" value="RIBOSOME-BINDING FACTOR A, CHLOROPLASTIC-RELATED"/>
    <property type="match status" value="1"/>
</dbReference>
<dbReference type="PANTHER" id="PTHR33515:SF1">
    <property type="entry name" value="RIBOSOME-BINDING FACTOR A, CHLOROPLASTIC-RELATED"/>
    <property type="match status" value="1"/>
</dbReference>
<dbReference type="Pfam" id="PF02033">
    <property type="entry name" value="RBFA"/>
    <property type="match status" value="1"/>
</dbReference>
<dbReference type="SUPFAM" id="SSF89919">
    <property type="entry name" value="Ribosome-binding factor A, RbfA"/>
    <property type="match status" value="1"/>
</dbReference>
<protein>
    <recommendedName>
        <fullName evidence="1">Ribosome-binding factor A</fullName>
    </recommendedName>
</protein>
<accession>Q12AU6</accession>
<organism>
    <name type="scientific">Polaromonas sp. (strain JS666 / ATCC BAA-500)</name>
    <dbReference type="NCBI Taxonomy" id="296591"/>
    <lineage>
        <taxon>Bacteria</taxon>
        <taxon>Pseudomonadati</taxon>
        <taxon>Pseudomonadota</taxon>
        <taxon>Betaproteobacteria</taxon>
        <taxon>Burkholderiales</taxon>
        <taxon>Comamonadaceae</taxon>
        <taxon>Polaromonas</taxon>
    </lineage>
</organism>
<keyword id="KW-0963">Cytoplasm</keyword>
<keyword id="KW-1185">Reference proteome</keyword>
<keyword id="KW-0690">Ribosome biogenesis</keyword>
<reference key="1">
    <citation type="journal article" date="2008" name="Appl. Environ. Microbiol.">
        <title>The genome of Polaromonas sp. strain JS666: insights into the evolution of a hydrocarbon- and xenobiotic-degrading bacterium, and features of relevance to biotechnology.</title>
        <authorList>
            <person name="Mattes T.E."/>
            <person name="Alexander A.K."/>
            <person name="Richardson P.M."/>
            <person name="Munk A.C."/>
            <person name="Han C.S."/>
            <person name="Stothard P."/>
            <person name="Coleman N.V."/>
        </authorList>
    </citation>
    <scope>NUCLEOTIDE SEQUENCE [LARGE SCALE GENOMIC DNA]</scope>
    <source>
        <strain>JS666 / ATCC BAA-500</strain>
    </source>
</reference>
<feature type="chain" id="PRO_1000000163" description="Ribosome-binding factor A">
    <location>
        <begin position="1"/>
        <end position="122"/>
    </location>
</feature>
<comment type="function">
    <text evidence="1">One of several proteins that assist in the late maturation steps of the functional core of the 30S ribosomal subunit. Associates with free 30S ribosomal subunits (but not with 30S subunits that are part of 70S ribosomes or polysomes). Required for efficient processing of 16S rRNA. May interact with the 5'-terminal helix region of 16S rRNA.</text>
</comment>
<comment type="subunit">
    <text evidence="1">Monomer. Binds 30S ribosomal subunits, but not 50S ribosomal subunits or 70S ribosomes.</text>
</comment>
<comment type="subcellular location">
    <subcellularLocation>
        <location evidence="1">Cytoplasm</location>
    </subcellularLocation>
</comment>
<comment type="similarity">
    <text evidence="1">Belongs to the RbfA family.</text>
</comment>
<name>RBFA_POLSJ</name>
<evidence type="ECO:0000255" key="1">
    <source>
        <dbReference type="HAMAP-Rule" id="MF_00003"/>
    </source>
</evidence>
<sequence length="122" mass="13669">MRKKSSTPNRGFRVADQIQRDLTELIARELKDPRVGMVTIQAVEVTPDYAHAKVFFSVLVGDPKACEEALNQAAGFLRNGLFKRLMTHTVPTLHFHFDRTTERAADMNALIAKAVSSRAKDD</sequence>
<proteinExistence type="inferred from homology"/>
<gene>
    <name evidence="1" type="primary">rbfA</name>
    <name type="ordered locus">Bpro_2427</name>
</gene>